<organism>
    <name type="scientific">Bacillus subtilis (strain 168)</name>
    <dbReference type="NCBI Taxonomy" id="224308"/>
    <lineage>
        <taxon>Bacteria</taxon>
        <taxon>Bacillati</taxon>
        <taxon>Bacillota</taxon>
        <taxon>Bacilli</taxon>
        <taxon>Bacillales</taxon>
        <taxon>Bacillaceae</taxon>
        <taxon>Bacillus</taxon>
    </lineage>
</organism>
<sequence length="389" mass="43297">MKRLLSTLLIGIMLLTFAPSAFAKQDGKRTSELAHEAKSAVLIERDTGKVLYNKNSNERLAPASMTKIMTMLLIMEALDKGKIKMSDKVRTSEHAASMGGSQIFLEPGEEMTVKEMLKGIAIASGNDASVAMAEFISGSEEEFVKKMNKKAKELGLKNTSFKNPTGLTEEGHYSSAYDMAIMAKELLKYESITKFTGTYEDYLRENTDKKFWLVNTNRLIKFYPGVDGVKTGYTGEAKYCLTASAKKGNMRAIAVVFGASTPKERNAQVTKMLDFAFSQYETHPLYKRNQTVAKVKVKKGKQKFIELTTSEPISILTKKGEDMNDVKKEIKMKDNISAPIQKGQELGTLVLKKDGEVLAESPVAAKEDMKKAGFITFLKRTMGDWTKFK</sequence>
<evidence type="ECO:0000250" key="1"/>
<evidence type="ECO:0000255" key="2"/>
<evidence type="ECO:0000305" key="3"/>
<accession>P38422</accession>
<keyword id="KW-0121">Carboxypeptidase</keyword>
<keyword id="KW-0133">Cell shape</keyword>
<keyword id="KW-0961">Cell wall biogenesis/degradation</keyword>
<keyword id="KW-0378">Hydrolase</keyword>
<keyword id="KW-0573">Peptidoglycan synthesis</keyword>
<keyword id="KW-0645">Protease</keyword>
<keyword id="KW-1185">Reference proteome</keyword>
<keyword id="KW-0964">Secreted</keyword>
<keyword id="KW-0732">Signal</keyword>
<comment type="function">
    <text>Removes C-terminal D-alanyl residues from sugar-peptide cell wall precursors.</text>
</comment>
<comment type="catalytic activity">
    <reaction>
        <text>Preferential cleavage: (Ac)2-L-Lys-D-Ala-|-D-Ala. Also transpeptidation of peptidyl-alanyl moieties that are N-acyl substituents of D-alanine.</text>
        <dbReference type="EC" id="3.4.16.4"/>
    </reaction>
</comment>
<comment type="pathway">
    <text>Cell wall biogenesis; peptidoglycan biosynthesis.</text>
</comment>
<comment type="subcellular location">
    <subcellularLocation>
        <location evidence="3">Secreted</location>
    </subcellularLocation>
</comment>
<comment type="developmental stage">
    <text>Expressed in the forespore.</text>
</comment>
<comment type="similarity">
    <text evidence="3">Belongs to the peptidase S11 family.</text>
</comment>
<dbReference type="EC" id="3.4.16.4"/>
<dbReference type="EMBL" id="M85047">
    <property type="protein sequence ID" value="AAA22704.1"/>
    <property type="molecule type" value="Genomic_DNA"/>
</dbReference>
<dbReference type="EMBL" id="D84432">
    <property type="protein sequence ID" value="BAA12652.1"/>
    <property type="molecule type" value="Genomic_DNA"/>
</dbReference>
<dbReference type="EMBL" id="AL009126">
    <property type="protein sequence ID" value="CAB14280.1"/>
    <property type="molecule type" value="Genomic_DNA"/>
</dbReference>
<dbReference type="PIR" id="B42708">
    <property type="entry name" value="B42708"/>
</dbReference>
<dbReference type="RefSeq" id="NP_390229.1">
    <property type="nucleotide sequence ID" value="NC_000964.3"/>
</dbReference>
<dbReference type="RefSeq" id="WP_004398637.1">
    <property type="nucleotide sequence ID" value="NZ_OZ025638.1"/>
</dbReference>
<dbReference type="SMR" id="P38422"/>
<dbReference type="FunCoup" id="P38422">
    <property type="interactions" value="260"/>
</dbReference>
<dbReference type="STRING" id="224308.BSU23480"/>
<dbReference type="MEROPS" id="S11.005"/>
<dbReference type="PaxDb" id="224308-BSU23480"/>
<dbReference type="EnsemblBacteria" id="CAB14280">
    <property type="protein sequence ID" value="CAB14280"/>
    <property type="gene ID" value="BSU_23480"/>
</dbReference>
<dbReference type="GeneID" id="938732"/>
<dbReference type="KEGG" id="bsu:BSU23480"/>
<dbReference type="PATRIC" id="fig|224308.179.peg.2558"/>
<dbReference type="eggNOG" id="COG1686">
    <property type="taxonomic scope" value="Bacteria"/>
</dbReference>
<dbReference type="InParanoid" id="P38422"/>
<dbReference type="OrthoDB" id="9791132at2"/>
<dbReference type="PhylomeDB" id="P38422"/>
<dbReference type="BioCyc" id="BSUB:BSU23480-MONOMER"/>
<dbReference type="UniPathway" id="UPA00219"/>
<dbReference type="Proteomes" id="UP000001570">
    <property type="component" value="Chromosome"/>
</dbReference>
<dbReference type="GO" id="GO:0005576">
    <property type="term" value="C:extracellular region"/>
    <property type="evidence" value="ECO:0007669"/>
    <property type="project" value="UniProtKB-SubCell"/>
</dbReference>
<dbReference type="GO" id="GO:0009002">
    <property type="term" value="F:serine-type D-Ala-D-Ala carboxypeptidase activity"/>
    <property type="evidence" value="ECO:0007669"/>
    <property type="project" value="UniProtKB-EC"/>
</dbReference>
<dbReference type="GO" id="GO:0071555">
    <property type="term" value="P:cell wall organization"/>
    <property type="evidence" value="ECO:0007669"/>
    <property type="project" value="UniProtKB-KW"/>
</dbReference>
<dbReference type="GO" id="GO:0009252">
    <property type="term" value="P:peptidoglycan biosynthetic process"/>
    <property type="evidence" value="ECO:0007669"/>
    <property type="project" value="UniProtKB-UniPathway"/>
</dbReference>
<dbReference type="GO" id="GO:0006508">
    <property type="term" value="P:proteolysis"/>
    <property type="evidence" value="ECO:0007669"/>
    <property type="project" value="UniProtKB-KW"/>
</dbReference>
<dbReference type="GO" id="GO:0008360">
    <property type="term" value="P:regulation of cell shape"/>
    <property type="evidence" value="ECO:0007669"/>
    <property type="project" value="UniProtKB-KW"/>
</dbReference>
<dbReference type="FunFam" id="3.40.710.10:FF:000023">
    <property type="entry name" value="D-alanyl-D-alanine carboxypeptidase DacF"/>
    <property type="match status" value="1"/>
</dbReference>
<dbReference type="Gene3D" id="2.60.410.10">
    <property type="entry name" value="D-Ala-D-Ala carboxypeptidase, C-terminal domain"/>
    <property type="match status" value="1"/>
</dbReference>
<dbReference type="Gene3D" id="3.40.710.10">
    <property type="entry name" value="DD-peptidase/beta-lactamase superfamily"/>
    <property type="match status" value="1"/>
</dbReference>
<dbReference type="InterPro" id="IPR012338">
    <property type="entry name" value="Beta-lactam/transpept-like"/>
</dbReference>
<dbReference type="InterPro" id="IPR015956">
    <property type="entry name" value="Peniciliin-bd_prot_C_sf"/>
</dbReference>
<dbReference type="InterPro" id="IPR018044">
    <property type="entry name" value="Peptidase_S11"/>
</dbReference>
<dbReference type="InterPro" id="IPR012907">
    <property type="entry name" value="Peptidase_S11_C"/>
</dbReference>
<dbReference type="InterPro" id="IPR037167">
    <property type="entry name" value="Peptidase_S11_C_sf"/>
</dbReference>
<dbReference type="InterPro" id="IPR001967">
    <property type="entry name" value="Peptidase_S11_N"/>
</dbReference>
<dbReference type="PANTHER" id="PTHR21581">
    <property type="entry name" value="D-ALANYL-D-ALANINE CARBOXYPEPTIDASE"/>
    <property type="match status" value="1"/>
</dbReference>
<dbReference type="PANTHER" id="PTHR21581:SF6">
    <property type="entry name" value="TRAFFICKING PROTEIN PARTICLE COMPLEX SUBUNIT 12"/>
    <property type="match status" value="1"/>
</dbReference>
<dbReference type="Pfam" id="PF07943">
    <property type="entry name" value="PBP5_C"/>
    <property type="match status" value="1"/>
</dbReference>
<dbReference type="Pfam" id="PF00768">
    <property type="entry name" value="Peptidase_S11"/>
    <property type="match status" value="1"/>
</dbReference>
<dbReference type="PRINTS" id="PR00725">
    <property type="entry name" value="DADACBPTASE1"/>
</dbReference>
<dbReference type="SMART" id="SM00936">
    <property type="entry name" value="PBP5_C"/>
    <property type="match status" value="1"/>
</dbReference>
<dbReference type="SUPFAM" id="SSF56601">
    <property type="entry name" value="beta-lactamase/transpeptidase-like"/>
    <property type="match status" value="1"/>
</dbReference>
<dbReference type="SUPFAM" id="SSF69189">
    <property type="entry name" value="Penicillin-binding protein associated domain"/>
    <property type="match status" value="1"/>
</dbReference>
<proteinExistence type="evidence at transcript level"/>
<protein>
    <recommendedName>
        <fullName>D-alanyl-D-alanine carboxypeptidase DacF</fullName>
        <shortName>DD-carboxypeptidase</shortName>
        <shortName>DD-peptidase</shortName>
        <ecNumber>3.4.16.4</ecNumber>
    </recommendedName>
    <alternativeName>
        <fullName>Penicillin-binding protein DacF</fullName>
        <shortName>PBP</shortName>
    </alternativeName>
</protein>
<reference key="1">
    <citation type="journal article" date="1992" name="J. Bacteriol.">
        <title>Characterization of a Bacillus subtilis sporulation operon that includes genes for an RNA polymerase sigma factor and for a putative DD-carboxypeptidase.</title>
        <authorList>
            <person name="Wu J.-J."/>
            <person name="Schuch R."/>
            <person name="Piggot P.J."/>
        </authorList>
    </citation>
    <scope>NUCLEOTIDE SEQUENCE [GENOMIC DNA]</scope>
    <source>
        <strain>168 / MB24</strain>
    </source>
</reference>
<reference key="2">
    <citation type="journal article" date="1996" name="Microbiology">
        <title>Systematic sequencing of the 283 kb 210 degrees-232 degrees region of the Bacillus subtilis genome containing the skin element and many sporulation genes.</title>
        <authorList>
            <person name="Mizuno M."/>
            <person name="Masuda S."/>
            <person name="Takemaru K."/>
            <person name="Hosono S."/>
            <person name="Sato T."/>
            <person name="Takeuchi M."/>
            <person name="Kobayashi Y."/>
        </authorList>
    </citation>
    <scope>NUCLEOTIDE SEQUENCE [GENOMIC DNA]</scope>
    <source>
        <strain>168 / JH642</strain>
    </source>
</reference>
<reference key="3">
    <citation type="journal article" date="1997" name="Nature">
        <title>The complete genome sequence of the Gram-positive bacterium Bacillus subtilis.</title>
        <authorList>
            <person name="Kunst F."/>
            <person name="Ogasawara N."/>
            <person name="Moszer I."/>
            <person name="Albertini A.M."/>
            <person name="Alloni G."/>
            <person name="Azevedo V."/>
            <person name="Bertero M.G."/>
            <person name="Bessieres P."/>
            <person name="Bolotin A."/>
            <person name="Borchert S."/>
            <person name="Borriss R."/>
            <person name="Boursier L."/>
            <person name="Brans A."/>
            <person name="Braun M."/>
            <person name="Brignell S.C."/>
            <person name="Bron S."/>
            <person name="Brouillet S."/>
            <person name="Bruschi C.V."/>
            <person name="Caldwell B."/>
            <person name="Capuano V."/>
            <person name="Carter N.M."/>
            <person name="Choi S.-K."/>
            <person name="Codani J.-J."/>
            <person name="Connerton I.F."/>
            <person name="Cummings N.J."/>
            <person name="Daniel R.A."/>
            <person name="Denizot F."/>
            <person name="Devine K.M."/>
            <person name="Duesterhoeft A."/>
            <person name="Ehrlich S.D."/>
            <person name="Emmerson P.T."/>
            <person name="Entian K.-D."/>
            <person name="Errington J."/>
            <person name="Fabret C."/>
            <person name="Ferrari E."/>
            <person name="Foulger D."/>
            <person name="Fritz C."/>
            <person name="Fujita M."/>
            <person name="Fujita Y."/>
            <person name="Fuma S."/>
            <person name="Galizzi A."/>
            <person name="Galleron N."/>
            <person name="Ghim S.-Y."/>
            <person name="Glaser P."/>
            <person name="Goffeau A."/>
            <person name="Golightly E.J."/>
            <person name="Grandi G."/>
            <person name="Guiseppi G."/>
            <person name="Guy B.J."/>
            <person name="Haga K."/>
            <person name="Haiech J."/>
            <person name="Harwood C.R."/>
            <person name="Henaut A."/>
            <person name="Hilbert H."/>
            <person name="Holsappel S."/>
            <person name="Hosono S."/>
            <person name="Hullo M.-F."/>
            <person name="Itaya M."/>
            <person name="Jones L.-M."/>
            <person name="Joris B."/>
            <person name="Karamata D."/>
            <person name="Kasahara Y."/>
            <person name="Klaerr-Blanchard M."/>
            <person name="Klein C."/>
            <person name="Kobayashi Y."/>
            <person name="Koetter P."/>
            <person name="Koningstein G."/>
            <person name="Krogh S."/>
            <person name="Kumano M."/>
            <person name="Kurita K."/>
            <person name="Lapidus A."/>
            <person name="Lardinois S."/>
            <person name="Lauber J."/>
            <person name="Lazarevic V."/>
            <person name="Lee S.-M."/>
            <person name="Levine A."/>
            <person name="Liu H."/>
            <person name="Masuda S."/>
            <person name="Mauel C."/>
            <person name="Medigue C."/>
            <person name="Medina N."/>
            <person name="Mellado R.P."/>
            <person name="Mizuno M."/>
            <person name="Moestl D."/>
            <person name="Nakai S."/>
            <person name="Noback M."/>
            <person name="Noone D."/>
            <person name="O'Reilly M."/>
            <person name="Ogawa K."/>
            <person name="Ogiwara A."/>
            <person name="Oudega B."/>
            <person name="Park S.-H."/>
            <person name="Parro V."/>
            <person name="Pohl T.M."/>
            <person name="Portetelle D."/>
            <person name="Porwollik S."/>
            <person name="Prescott A.M."/>
            <person name="Presecan E."/>
            <person name="Pujic P."/>
            <person name="Purnelle B."/>
            <person name="Rapoport G."/>
            <person name="Rey M."/>
            <person name="Reynolds S."/>
            <person name="Rieger M."/>
            <person name="Rivolta C."/>
            <person name="Rocha E."/>
            <person name="Roche B."/>
            <person name="Rose M."/>
            <person name="Sadaie Y."/>
            <person name="Sato T."/>
            <person name="Scanlan E."/>
            <person name="Schleich S."/>
            <person name="Schroeter R."/>
            <person name="Scoffone F."/>
            <person name="Sekiguchi J."/>
            <person name="Sekowska A."/>
            <person name="Seror S.J."/>
            <person name="Serror P."/>
            <person name="Shin B.-S."/>
            <person name="Soldo B."/>
            <person name="Sorokin A."/>
            <person name="Tacconi E."/>
            <person name="Takagi T."/>
            <person name="Takahashi H."/>
            <person name="Takemaru K."/>
            <person name="Takeuchi M."/>
            <person name="Tamakoshi A."/>
            <person name="Tanaka T."/>
            <person name="Terpstra P."/>
            <person name="Tognoni A."/>
            <person name="Tosato V."/>
            <person name="Uchiyama S."/>
            <person name="Vandenbol M."/>
            <person name="Vannier F."/>
            <person name="Vassarotti A."/>
            <person name="Viari A."/>
            <person name="Wambutt R."/>
            <person name="Wedler E."/>
            <person name="Wedler H."/>
            <person name="Weitzenegger T."/>
            <person name="Winters P."/>
            <person name="Wipat A."/>
            <person name="Yamamoto H."/>
            <person name="Yamane K."/>
            <person name="Yasumoto K."/>
            <person name="Yata K."/>
            <person name="Yoshida K."/>
            <person name="Yoshikawa H.-F."/>
            <person name="Zumstein E."/>
            <person name="Yoshikawa H."/>
            <person name="Danchin A."/>
        </authorList>
    </citation>
    <scope>NUCLEOTIDE SEQUENCE [LARGE SCALE GENOMIC DNA]</scope>
    <source>
        <strain>168</strain>
    </source>
</reference>
<feature type="signal peptide" evidence="2">
    <location>
        <begin position="1"/>
        <end position="23"/>
    </location>
</feature>
<feature type="chain" id="PRO_0000027230" description="D-alanyl-D-alanine carboxypeptidase DacF">
    <location>
        <begin position="24"/>
        <end position="389"/>
    </location>
</feature>
<feature type="active site" description="Acyl-ester intermediate" evidence="1">
    <location>
        <position position="64"/>
    </location>
</feature>
<feature type="active site" description="Proton acceptor" evidence="1">
    <location>
        <position position="67"/>
    </location>
</feature>
<feature type="active site" evidence="1">
    <location>
        <position position="124"/>
    </location>
</feature>
<feature type="binding site" evidence="1">
    <location>
        <position position="230"/>
    </location>
    <ligand>
        <name>substrate</name>
    </ligand>
</feature>
<feature type="sequence conflict" description="In Ref. 1; AAA22704." evidence="3" ref="1">
    <original>T</original>
    <variation>S</variation>
    <location>
        <position position="376"/>
    </location>
</feature>
<gene>
    <name type="primary">dacF</name>
    <name type="ordered locus">BSU23480</name>
</gene>
<name>DACF_BACSU</name>